<sequence length="172" mass="19856">MTYISKKQAAKKVIVREKPILVRLKLIIGAGTASMTPPLGPNLGQYGINSIEFFNDFNTETKELFETGLALRVILWINVMKAFYFELQMPKISNLLKEYYKVECEAAKGGNVYIEKERLLKDCFKIAILLCTFNKAEKQWEQIEKKYLRITVLEILGTCRSCKIYVKKAENE</sequence>
<feature type="chain" id="PRO_0000312372" description="Large ribosomal subunit protein uL11m">
    <location>
        <begin position="1"/>
        <end position="172"/>
    </location>
</feature>
<geneLocation type="mitochondrion"/>
<evidence type="ECO:0000305" key="1"/>
<proteinExistence type="inferred from homology"/>
<comment type="subcellular location">
    <subcellularLocation>
        <location>Mitochondrion</location>
    </subcellularLocation>
</comment>
<comment type="similarity">
    <text evidence="1">Belongs to the universal ribosomal protein uL11 family.</text>
</comment>
<reference key="1">
    <citation type="journal article" date="1995" name="DNA Res.">
        <title>Mitochondrial ribosomal protein L11 gene of Dictyostelium discoideum resides not in the nuclear genome but in the mitochondrial genome.</title>
        <authorList>
            <person name="Iwamoto M."/>
            <person name="Yanagisawa K."/>
            <person name="Tanaka Y."/>
        </authorList>
    </citation>
    <scope>NUCLEOTIDE SEQUENCE [GENOMIC DNA]</scope>
    <source>
        <strain>AX3</strain>
    </source>
</reference>
<reference key="2">
    <citation type="journal article" date="1998" name="Curr. Genet.">
        <title>A ribosomal protein gene cluster is encoded in the mitochondrial DNA of Dictyostelium discoideum: UGA termination codons and similarity of gene order to Acanthamoeba castellanii.</title>
        <authorList>
            <person name="Iwamoto M."/>
            <person name="Pi M."/>
            <person name="Kurihara M."/>
            <person name="Morio T."/>
            <person name="Tanaka Y."/>
        </authorList>
    </citation>
    <scope>NUCLEOTIDE SEQUENCE [GENOMIC DNA]</scope>
    <source>
        <strain>AX3</strain>
    </source>
</reference>
<reference key="3">
    <citation type="journal article" date="2000" name="Mol. Gen. Genet.">
        <title>The mitochondrial DNA of Dictyostelium discoideum: complete sequence, gene content and genome organization.</title>
        <authorList>
            <person name="Ogawa S."/>
            <person name="Yoshino R."/>
            <person name="Angata K."/>
            <person name="Iwamoto M."/>
            <person name="Pi M."/>
            <person name="Kuroe K."/>
            <person name="Matsuo K."/>
            <person name="Morio T."/>
            <person name="Urushihara H."/>
            <person name="Yanagisawa K."/>
            <person name="Tanaka Y."/>
        </authorList>
    </citation>
    <scope>NUCLEOTIDE SEQUENCE [LARGE SCALE GENOMIC DNA]</scope>
    <source>
        <strain>AX3</strain>
    </source>
</reference>
<keyword id="KW-0496">Mitochondrion</keyword>
<keyword id="KW-1185">Reference proteome</keyword>
<keyword id="KW-0687">Ribonucleoprotein</keyword>
<keyword id="KW-0689">Ribosomal protein</keyword>
<dbReference type="EMBL" id="D21196">
    <property type="protein sequence ID" value="BAA04733.1"/>
    <property type="molecule type" value="Genomic_DNA"/>
</dbReference>
<dbReference type="EMBL" id="AB000109">
    <property type="protein sequence ID" value="BAA78069.1"/>
    <property type="molecule type" value="Genomic_DNA"/>
</dbReference>
<dbReference type="PIR" id="JC4192">
    <property type="entry name" value="JC4192"/>
</dbReference>
<dbReference type="PIR" id="T43765">
    <property type="entry name" value="T43765"/>
</dbReference>
<dbReference type="RefSeq" id="NP_050087.1">
    <property type="nucleotide sequence ID" value="NC_000895.1"/>
</dbReference>
<dbReference type="SMR" id="Q23884"/>
<dbReference type="FunCoup" id="Q23884">
    <property type="interactions" value="233"/>
</dbReference>
<dbReference type="STRING" id="44689.Q23884"/>
<dbReference type="GeneID" id="2193916"/>
<dbReference type="KEGG" id="ddi:DidioMp20"/>
<dbReference type="dictyBase" id="DDB_G0294040">
    <property type="gene designation" value="mrpl11"/>
</dbReference>
<dbReference type="VEuPathDB" id="AmoebaDB:DidioMp20"/>
<dbReference type="InParanoid" id="Q23884"/>
<dbReference type="PhylomeDB" id="Q23884"/>
<dbReference type="PRO" id="PR:Q23884"/>
<dbReference type="Proteomes" id="UP000002195">
    <property type="component" value="Mitochondrion"/>
</dbReference>
<dbReference type="GO" id="GO:0005762">
    <property type="term" value="C:mitochondrial large ribosomal subunit"/>
    <property type="evidence" value="ECO:0000318"/>
    <property type="project" value="GO_Central"/>
</dbReference>
<dbReference type="GO" id="GO:0070180">
    <property type="term" value="F:large ribosomal subunit rRNA binding"/>
    <property type="evidence" value="ECO:0000318"/>
    <property type="project" value="GO_Central"/>
</dbReference>
<dbReference type="GO" id="GO:0003735">
    <property type="term" value="F:structural constituent of ribosome"/>
    <property type="evidence" value="ECO:0000318"/>
    <property type="project" value="GO_Central"/>
</dbReference>
<dbReference type="GO" id="GO:0006412">
    <property type="term" value="P:translation"/>
    <property type="evidence" value="ECO:0000318"/>
    <property type="project" value="GO_Central"/>
</dbReference>
<dbReference type="CDD" id="cd00349">
    <property type="entry name" value="Ribosomal_L11"/>
    <property type="match status" value="1"/>
</dbReference>
<dbReference type="FunFam" id="3.30.1550.10:FF:000019">
    <property type="entry name" value="60S ribosomal protein L11, mitochondrial"/>
    <property type="match status" value="1"/>
</dbReference>
<dbReference type="Gene3D" id="3.30.1550.10">
    <property type="entry name" value="Ribosomal protein L11/L12, N-terminal domain"/>
    <property type="match status" value="1"/>
</dbReference>
<dbReference type="HAMAP" id="MF_00736">
    <property type="entry name" value="Ribosomal_uL11"/>
    <property type="match status" value="1"/>
</dbReference>
<dbReference type="InterPro" id="IPR000911">
    <property type="entry name" value="Ribosomal_uL11"/>
</dbReference>
<dbReference type="InterPro" id="IPR020784">
    <property type="entry name" value="Ribosomal_uL11_N"/>
</dbReference>
<dbReference type="InterPro" id="IPR036796">
    <property type="entry name" value="Ribosomal_uL11_N_sf"/>
</dbReference>
<dbReference type="PANTHER" id="PTHR11661">
    <property type="entry name" value="60S RIBOSOMAL PROTEIN L12"/>
    <property type="match status" value="1"/>
</dbReference>
<dbReference type="PANTHER" id="PTHR11661:SF1">
    <property type="entry name" value="LARGE RIBOSOMAL SUBUNIT PROTEIN UL11M"/>
    <property type="match status" value="1"/>
</dbReference>
<dbReference type="Pfam" id="PF03946">
    <property type="entry name" value="Ribosomal_L11_N"/>
    <property type="match status" value="1"/>
</dbReference>
<dbReference type="SMART" id="SM00649">
    <property type="entry name" value="RL11"/>
    <property type="match status" value="1"/>
</dbReference>
<dbReference type="SUPFAM" id="SSF54747">
    <property type="entry name" value="Ribosomal L11/L12e N-terminal domain"/>
    <property type="match status" value="1"/>
</dbReference>
<protein>
    <recommendedName>
        <fullName evidence="1">Large ribosomal subunit protein uL11m</fullName>
    </recommendedName>
    <alternativeName>
        <fullName>60S ribosomal protein L11, mitochondrial</fullName>
    </alternativeName>
</protein>
<accession>Q23884</accession>
<accession>Q9XPJ6</accession>
<gene>
    <name type="primary">mrpl11</name>
    <name type="synonym">rpl11</name>
    <name type="ORF">DDB_G0294040</name>
</gene>
<name>RM11_DICDI</name>
<organism>
    <name type="scientific">Dictyostelium discoideum</name>
    <name type="common">Social amoeba</name>
    <dbReference type="NCBI Taxonomy" id="44689"/>
    <lineage>
        <taxon>Eukaryota</taxon>
        <taxon>Amoebozoa</taxon>
        <taxon>Evosea</taxon>
        <taxon>Eumycetozoa</taxon>
        <taxon>Dictyostelia</taxon>
        <taxon>Dictyosteliales</taxon>
        <taxon>Dictyosteliaceae</taxon>
        <taxon>Dictyostelium</taxon>
    </lineage>
</organism>